<feature type="chain" id="PRO_0000130132" description="Small ribosomal subunit protein uS3">
    <location>
        <begin position="1"/>
        <end position="226"/>
    </location>
</feature>
<feature type="domain" description="KH type-2" evidence="1">
    <location>
        <begin position="39"/>
        <end position="107"/>
    </location>
</feature>
<organism>
    <name type="scientific">Idiomarina loihiensis (strain ATCC BAA-735 / DSM 15497 / L2-TR)</name>
    <dbReference type="NCBI Taxonomy" id="283942"/>
    <lineage>
        <taxon>Bacteria</taxon>
        <taxon>Pseudomonadati</taxon>
        <taxon>Pseudomonadota</taxon>
        <taxon>Gammaproteobacteria</taxon>
        <taxon>Alteromonadales</taxon>
        <taxon>Idiomarinaceae</taxon>
        <taxon>Idiomarina</taxon>
    </lineage>
</organism>
<reference key="1">
    <citation type="journal article" date="2004" name="Proc. Natl. Acad. Sci. U.S.A.">
        <title>Genome sequence of the deep-sea gamma-proteobacterium Idiomarina loihiensis reveals amino acid fermentation as a source of carbon and energy.</title>
        <authorList>
            <person name="Hou S."/>
            <person name="Saw J.H."/>
            <person name="Lee K.S."/>
            <person name="Freitas T.A."/>
            <person name="Belisle C."/>
            <person name="Kawarabayasi Y."/>
            <person name="Donachie S.P."/>
            <person name="Pikina A."/>
            <person name="Galperin M.Y."/>
            <person name="Koonin E.V."/>
            <person name="Makarova K.S."/>
            <person name="Omelchenko M.V."/>
            <person name="Sorokin A."/>
            <person name="Wolf Y.I."/>
            <person name="Li Q.X."/>
            <person name="Keum Y.S."/>
            <person name="Campbell S."/>
            <person name="Denery J."/>
            <person name="Aizawa S."/>
            <person name="Shibata S."/>
            <person name="Malahoff A."/>
            <person name="Alam M."/>
        </authorList>
    </citation>
    <scope>NUCLEOTIDE SEQUENCE [LARGE SCALE GENOMIC DNA]</scope>
    <source>
        <strain>ATCC BAA-735 / DSM 15497 / L2-TR</strain>
    </source>
</reference>
<protein>
    <recommendedName>
        <fullName evidence="1">Small ribosomal subunit protein uS3</fullName>
    </recommendedName>
    <alternativeName>
        <fullName evidence="2">30S ribosomal protein S3</fullName>
    </alternativeName>
</protein>
<gene>
    <name evidence="1" type="primary">rpsC</name>
    <name type="ordered locus">IL1918</name>
</gene>
<name>RS3_IDILO</name>
<evidence type="ECO:0000255" key="1">
    <source>
        <dbReference type="HAMAP-Rule" id="MF_01309"/>
    </source>
</evidence>
<evidence type="ECO:0000305" key="2"/>
<comment type="function">
    <text evidence="1">Binds the lower part of the 30S subunit head. Binds mRNA in the 70S ribosome, positioning it for translation.</text>
</comment>
<comment type="subunit">
    <text evidence="1">Part of the 30S ribosomal subunit. Forms a tight complex with proteins S10 and S14.</text>
</comment>
<comment type="similarity">
    <text evidence="1">Belongs to the universal ribosomal protein uS3 family.</text>
</comment>
<accession>Q5QXY3</accession>
<dbReference type="EMBL" id="AE017340">
    <property type="protein sequence ID" value="AAV82750.1"/>
    <property type="molecule type" value="Genomic_DNA"/>
</dbReference>
<dbReference type="RefSeq" id="WP_011235147.1">
    <property type="nucleotide sequence ID" value="NC_006512.1"/>
</dbReference>
<dbReference type="SMR" id="Q5QXY3"/>
<dbReference type="STRING" id="283942.IL1918"/>
<dbReference type="GeneID" id="41337106"/>
<dbReference type="KEGG" id="ilo:IL1918"/>
<dbReference type="eggNOG" id="COG0092">
    <property type="taxonomic scope" value="Bacteria"/>
</dbReference>
<dbReference type="HOGENOM" id="CLU_058591_0_2_6"/>
<dbReference type="OrthoDB" id="9806396at2"/>
<dbReference type="Proteomes" id="UP000001171">
    <property type="component" value="Chromosome"/>
</dbReference>
<dbReference type="GO" id="GO:0022627">
    <property type="term" value="C:cytosolic small ribosomal subunit"/>
    <property type="evidence" value="ECO:0007669"/>
    <property type="project" value="TreeGrafter"/>
</dbReference>
<dbReference type="GO" id="GO:0003729">
    <property type="term" value="F:mRNA binding"/>
    <property type="evidence" value="ECO:0007669"/>
    <property type="project" value="UniProtKB-UniRule"/>
</dbReference>
<dbReference type="GO" id="GO:0019843">
    <property type="term" value="F:rRNA binding"/>
    <property type="evidence" value="ECO:0007669"/>
    <property type="project" value="UniProtKB-UniRule"/>
</dbReference>
<dbReference type="GO" id="GO:0003735">
    <property type="term" value="F:structural constituent of ribosome"/>
    <property type="evidence" value="ECO:0007669"/>
    <property type="project" value="InterPro"/>
</dbReference>
<dbReference type="GO" id="GO:0006412">
    <property type="term" value="P:translation"/>
    <property type="evidence" value="ECO:0007669"/>
    <property type="project" value="UniProtKB-UniRule"/>
</dbReference>
<dbReference type="CDD" id="cd02412">
    <property type="entry name" value="KH-II_30S_S3"/>
    <property type="match status" value="1"/>
</dbReference>
<dbReference type="FunFam" id="3.30.1140.32:FF:000001">
    <property type="entry name" value="30S ribosomal protein S3"/>
    <property type="match status" value="1"/>
</dbReference>
<dbReference type="FunFam" id="3.30.300.20:FF:000001">
    <property type="entry name" value="30S ribosomal protein S3"/>
    <property type="match status" value="1"/>
</dbReference>
<dbReference type="Gene3D" id="3.30.300.20">
    <property type="match status" value="1"/>
</dbReference>
<dbReference type="Gene3D" id="3.30.1140.32">
    <property type="entry name" value="Ribosomal protein S3, C-terminal domain"/>
    <property type="match status" value="1"/>
</dbReference>
<dbReference type="HAMAP" id="MF_01309_B">
    <property type="entry name" value="Ribosomal_uS3_B"/>
    <property type="match status" value="1"/>
</dbReference>
<dbReference type="InterPro" id="IPR004087">
    <property type="entry name" value="KH_dom"/>
</dbReference>
<dbReference type="InterPro" id="IPR015946">
    <property type="entry name" value="KH_dom-like_a/b"/>
</dbReference>
<dbReference type="InterPro" id="IPR004044">
    <property type="entry name" value="KH_dom_type_2"/>
</dbReference>
<dbReference type="InterPro" id="IPR009019">
    <property type="entry name" value="KH_sf_prok-type"/>
</dbReference>
<dbReference type="InterPro" id="IPR036419">
    <property type="entry name" value="Ribosomal_S3_C_sf"/>
</dbReference>
<dbReference type="InterPro" id="IPR005704">
    <property type="entry name" value="Ribosomal_uS3_bac-typ"/>
</dbReference>
<dbReference type="InterPro" id="IPR001351">
    <property type="entry name" value="Ribosomal_uS3_C"/>
</dbReference>
<dbReference type="InterPro" id="IPR018280">
    <property type="entry name" value="Ribosomal_uS3_CS"/>
</dbReference>
<dbReference type="NCBIfam" id="TIGR01009">
    <property type="entry name" value="rpsC_bact"/>
    <property type="match status" value="1"/>
</dbReference>
<dbReference type="PANTHER" id="PTHR11760">
    <property type="entry name" value="30S/40S RIBOSOMAL PROTEIN S3"/>
    <property type="match status" value="1"/>
</dbReference>
<dbReference type="PANTHER" id="PTHR11760:SF19">
    <property type="entry name" value="SMALL RIBOSOMAL SUBUNIT PROTEIN US3C"/>
    <property type="match status" value="1"/>
</dbReference>
<dbReference type="Pfam" id="PF07650">
    <property type="entry name" value="KH_2"/>
    <property type="match status" value="1"/>
</dbReference>
<dbReference type="Pfam" id="PF00189">
    <property type="entry name" value="Ribosomal_S3_C"/>
    <property type="match status" value="1"/>
</dbReference>
<dbReference type="SMART" id="SM00322">
    <property type="entry name" value="KH"/>
    <property type="match status" value="1"/>
</dbReference>
<dbReference type="SUPFAM" id="SSF54814">
    <property type="entry name" value="Prokaryotic type KH domain (KH-domain type II)"/>
    <property type="match status" value="1"/>
</dbReference>
<dbReference type="SUPFAM" id="SSF54821">
    <property type="entry name" value="Ribosomal protein S3 C-terminal domain"/>
    <property type="match status" value="1"/>
</dbReference>
<dbReference type="PROSITE" id="PS50823">
    <property type="entry name" value="KH_TYPE_2"/>
    <property type="match status" value="1"/>
</dbReference>
<dbReference type="PROSITE" id="PS00548">
    <property type="entry name" value="RIBOSOMAL_S3"/>
    <property type="match status" value="1"/>
</dbReference>
<sequence>MGQKVHPNGIRLGISRPWNATWYANTNEFADNLHSDFQVRKFLNKELRNASVSRIVIDRPAKSVRVTIHTARPGVVIGKKGEDVEKLRKQVSKLTGAPAQINISEVRKPELDSQLVADNIAGQLERRVMFRRAMKRAVQNAIRLGAKGIKVEVSGRLGGAEIARTEWYREGRVPLHTLRADIDYSTSEANTTYGIIGVKVWIFRGEVLGGLPTEEKPAPKRGKNRK</sequence>
<keyword id="KW-1185">Reference proteome</keyword>
<keyword id="KW-0687">Ribonucleoprotein</keyword>
<keyword id="KW-0689">Ribosomal protein</keyword>
<keyword id="KW-0694">RNA-binding</keyword>
<keyword id="KW-0699">rRNA-binding</keyword>
<proteinExistence type="inferred from homology"/>